<protein>
    <recommendedName>
        <fullName evidence="1">Translation initiation factor IF-3</fullName>
    </recommendedName>
</protein>
<name>IF3_MYCPU</name>
<reference key="1">
    <citation type="journal article" date="2001" name="Nucleic Acids Res.">
        <title>The complete genome sequence of the murine respiratory pathogen Mycoplasma pulmonis.</title>
        <authorList>
            <person name="Chambaud I."/>
            <person name="Heilig R."/>
            <person name="Ferris S."/>
            <person name="Barbe V."/>
            <person name="Samson D."/>
            <person name="Galisson F."/>
            <person name="Moszer I."/>
            <person name="Dybvig K."/>
            <person name="Wroblewski H."/>
            <person name="Viari A."/>
            <person name="Rocha E.P.C."/>
            <person name="Blanchard A."/>
        </authorList>
    </citation>
    <scope>NUCLEOTIDE SEQUENCE [LARGE SCALE GENOMIC DNA]</scope>
    <source>
        <strain>UAB CTIP</strain>
    </source>
</reference>
<gene>
    <name evidence="1" type="primary">infC</name>
    <name type="ordered locus">MYPU_2590</name>
</gene>
<comment type="function">
    <text evidence="1">IF-3 binds to the 30S ribosomal subunit and shifts the equilibrium between 70S ribosomes and their 50S and 30S subunits in favor of the free subunits, thus enhancing the availability of 30S subunits on which protein synthesis initiation begins.</text>
</comment>
<comment type="subunit">
    <text evidence="1">Monomer.</text>
</comment>
<comment type="subcellular location">
    <subcellularLocation>
        <location evidence="1">Cytoplasm</location>
    </subcellularLocation>
</comment>
<comment type="similarity">
    <text evidence="1">Belongs to the IF-3 family.</text>
</comment>
<comment type="sequence caution" evidence="2">
    <conflict type="erroneous initiation">
        <sequence resource="EMBL-CDS" id="CAC13432"/>
    </conflict>
</comment>
<evidence type="ECO:0000255" key="1">
    <source>
        <dbReference type="HAMAP-Rule" id="MF_00080"/>
    </source>
</evidence>
<evidence type="ECO:0000305" key="2"/>
<feature type="chain" id="PRO_0000177544" description="Translation initiation factor IF-3">
    <location>
        <begin position="1"/>
        <end position="199"/>
    </location>
</feature>
<dbReference type="EMBL" id="AL445563">
    <property type="protein sequence ID" value="CAC13432.1"/>
    <property type="status" value="ALT_INIT"/>
    <property type="molecule type" value="Genomic_DNA"/>
</dbReference>
<dbReference type="PIR" id="C90544">
    <property type="entry name" value="C90544"/>
</dbReference>
<dbReference type="SMR" id="Q98QV2"/>
<dbReference type="STRING" id="272635.gene:17576849"/>
<dbReference type="KEGG" id="mpu:MYPU_2590"/>
<dbReference type="eggNOG" id="COG0290">
    <property type="taxonomic scope" value="Bacteria"/>
</dbReference>
<dbReference type="HOGENOM" id="CLU_054919_3_2_14"/>
<dbReference type="Proteomes" id="UP000000528">
    <property type="component" value="Chromosome"/>
</dbReference>
<dbReference type="GO" id="GO:0005829">
    <property type="term" value="C:cytosol"/>
    <property type="evidence" value="ECO:0007669"/>
    <property type="project" value="TreeGrafter"/>
</dbReference>
<dbReference type="GO" id="GO:0016020">
    <property type="term" value="C:membrane"/>
    <property type="evidence" value="ECO:0007669"/>
    <property type="project" value="TreeGrafter"/>
</dbReference>
<dbReference type="GO" id="GO:0043022">
    <property type="term" value="F:ribosome binding"/>
    <property type="evidence" value="ECO:0007669"/>
    <property type="project" value="TreeGrafter"/>
</dbReference>
<dbReference type="GO" id="GO:0003743">
    <property type="term" value="F:translation initiation factor activity"/>
    <property type="evidence" value="ECO:0007669"/>
    <property type="project" value="UniProtKB-UniRule"/>
</dbReference>
<dbReference type="GO" id="GO:0032790">
    <property type="term" value="P:ribosome disassembly"/>
    <property type="evidence" value="ECO:0007669"/>
    <property type="project" value="TreeGrafter"/>
</dbReference>
<dbReference type="Gene3D" id="3.30.110.10">
    <property type="entry name" value="Translation initiation factor 3 (IF-3), C-terminal domain"/>
    <property type="match status" value="1"/>
</dbReference>
<dbReference type="Gene3D" id="3.10.20.80">
    <property type="entry name" value="Translation initiation factor 3 (IF-3), N-terminal domain"/>
    <property type="match status" value="1"/>
</dbReference>
<dbReference type="HAMAP" id="MF_00080">
    <property type="entry name" value="IF_3"/>
    <property type="match status" value="1"/>
</dbReference>
<dbReference type="InterPro" id="IPR036788">
    <property type="entry name" value="T_IF-3_C_sf"/>
</dbReference>
<dbReference type="InterPro" id="IPR036787">
    <property type="entry name" value="T_IF-3_N_sf"/>
</dbReference>
<dbReference type="InterPro" id="IPR019813">
    <property type="entry name" value="Translation_initiation_fac3_CS"/>
</dbReference>
<dbReference type="InterPro" id="IPR001288">
    <property type="entry name" value="Translation_initiation_fac_3"/>
</dbReference>
<dbReference type="InterPro" id="IPR019815">
    <property type="entry name" value="Translation_initiation_fac_3_C"/>
</dbReference>
<dbReference type="InterPro" id="IPR019814">
    <property type="entry name" value="Translation_initiation_fac_3_N"/>
</dbReference>
<dbReference type="NCBIfam" id="TIGR00168">
    <property type="entry name" value="infC"/>
    <property type="match status" value="1"/>
</dbReference>
<dbReference type="PANTHER" id="PTHR10938">
    <property type="entry name" value="TRANSLATION INITIATION FACTOR IF-3"/>
    <property type="match status" value="1"/>
</dbReference>
<dbReference type="PANTHER" id="PTHR10938:SF0">
    <property type="entry name" value="TRANSLATION INITIATION FACTOR IF-3, MITOCHONDRIAL"/>
    <property type="match status" value="1"/>
</dbReference>
<dbReference type="Pfam" id="PF00707">
    <property type="entry name" value="IF3_C"/>
    <property type="match status" value="1"/>
</dbReference>
<dbReference type="Pfam" id="PF05198">
    <property type="entry name" value="IF3_N"/>
    <property type="match status" value="1"/>
</dbReference>
<dbReference type="SUPFAM" id="SSF55200">
    <property type="entry name" value="Translation initiation factor IF3, C-terminal domain"/>
    <property type="match status" value="1"/>
</dbReference>
<dbReference type="SUPFAM" id="SSF54364">
    <property type="entry name" value="Translation initiation factor IF3, N-terminal domain"/>
    <property type="match status" value="1"/>
</dbReference>
<dbReference type="PROSITE" id="PS00938">
    <property type="entry name" value="IF3"/>
    <property type="match status" value="1"/>
</dbReference>
<organism>
    <name type="scientific">Mycoplasmopsis pulmonis (strain UAB CTIP)</name>
    <name type="common">Mycoplasma pulmonis</name>
    <dbReference type="NCBI Taxonomy" id="272635"/>
    <lineage>
        <taxon>Bacteria</taxon>
        <taxon>Bacillati</taxon>
        <taxon>Mycoplasmatota</taxon>
        <taxon>Mycoplasmoidales</taxon>
        <taxon>Metamycoplasmataceae</taxon>
        <taxon>Mycoplasmopsis</taxon>
    </lineage>
</organism>
<sequence length="199" mass="23283">MSNTEQHQKKGQKNKVLLNNDIPFSKVFLIGEDGEKIGIKTKEEALDIARGEKKDLVLISVQPKPIARILDYGKFKYDRKKKEKEQKEKQTNINNRQIRLTPLIGDHDLLTKAKKTRELLLKGDRIKVSLKFKGREIARKELGIDTLNRFYEQVEDIAKIDKEPKLNQDRFLDMYLHPDKQKIAKYLKEKGEDNAKNEK</sequence>
<proteinExistence type="inferred from homology"/>
<accession>Q98QV2</accession>
<keyword id="KW-0963">Cytoplasm</keyword>
<keyword id="KW-0396">Initiation factor</keyword>
<keyword id="KW-0648">Protein biosynthesis</keyword>
<keyword id="KW-1185">Reference proteome</keyword>